<name>GSHB_NEIMA</name>
<feature type="chain" id="PRO_0000197469" description="Glutathione synthetase">
    <location>
        <begin position="1"/>
        <end position="318"/>
    </location>
</feature>
<feature type="domain" description="ATP-grasp" evidence="2">
    <location>
        <begin position="128"/>
        <end position="313"/>
    </location>
</feature>
<feature type="binding site" evidence="2">
    <location>
        <begin position="154"/>
        <end position="210"/>
    </location>
    <ligand>
        <name>ATP</name>
        <dbReference type="ChEBI" id="CHEBI:30616"/>
    </ligand>
</feature>
<feature type="binding site" evidence="2">
    <location>
        <position position="284"/>
    </location>
    <ligand>
        <name>Mg(2+)</name>
        <dbReference type="ChEBI" id="CHEBI:18420"/>
    </ligand>
</feature>
<feature type="binding site" evidence="2">
    <location>
        <position position="286"/>
    </location>
    <ligand>
        <name>Mg(2+)</name>
        <dbReference type="ChEBI" id="CHEBI:18420"/>
    </ligand>
</feature>
<dbReference type="EC" id="6.3.2.3" evidence="2"/>
<dbReference type="EMBL" id="AL157959">
    <property type="protein sequence ID" value="CAM08875.1"/>
    <property type="molecule type" value="Genomic_DNA"/>
</dbReference>
<dbReference type="PIR" id="C81799">
    <property type="entry name" value="C81799"/>
</dbReference>
<dbReference type="RefSeq" id="WP_010981234.1">
    <property type="nucleotide sequence ID" value="NC_003116.1"/>
</dbReference>
<dbReference type="SMR" id="Q9JTJ6"/>
<dbReference type="EnsemblBacteria" id="CAM08875">
    <property type="protein sequence ID" value="CAM08875"/>
    <property type="gene ID" value="NMA1747"/>
</dbReference>
<dbReference type="KEGG" id="nma:NMA1747"/>
<dbReference type="HOGENOM" id="CLU_068239_0_0_4"/>
<dbReference type="UniPathway" id="UPA00142">
    <property type="reaction ID" value="UER00210"/>
</dbReference>
<dbReference type="Proteomes" id="UP000000626">
    <property type="component" value="Chromosome"/>
</dbReference>
<dbReference type="GO" id="GO:0005737">
    <property type="term" value="C:cytoplasm"/>
    <property type="evidence" value="ECO:0007669"/>
    <property type="project" value="TreeGrafter"/>
</dbReference>
<dbReference type="GO" id="GO:0005524">
    <property type="term" value="F:ATP binding"/>
    <property type="evidence" value="ECO:0007669"/>
    <property type="project" value="UniProtKB-UniRule"/>
</dbReference>
<dbReference type="GO" id="GO:0004363">
    <property type="term" value="F:glutathione synthase activity"/>
    <property type="evidence" value="ECO:0007669"/>
    <property type="project" value="UniProtKB-UniRule"/>
</dbReference>
<dbReference type="GO" id="GO:0046872">
    <property type="term" value="F:metal ion binding"/>
    <property type="evidence" value="ECO:0007669"/>
    <property type="project" value="UniProtKB-KW"/>
</dbReference>
<dbReference type="FunFam" id="3.30.1490.20:FF:000009">
    <property type="entry name" value="Glutathione synthetase"/>
    <property type="match status" value="1"/>
</dbReference>
<dbReference type="Gene3D" id="3.40.50.20">
    <property type="match status" value="1"/>
</dbReference>
<dbReference type="Gene3D" id="3.30.1490.20">
    <property type="entry name" value="ATP-grasp fold, A domain"/>
    <property type="match status" value="1"/>
</dbReference>
<dbReference type="Gene3D" id="3.30.470.20">
    <property type="entry name" value="ATP-grasp fold, B domain"/>
    <property type="match status" value="1"/>
</dbReference>
<dbReference type="HAMAP" id="MF_00162">
    <property type="entry name" value="GSH_S"/>
    <property type="match status" value="1"/>
</dbReference>
<dbReference type="InterPro" id="IPR011761">
    <property type="entry name" value="ATP-grasp"/>
</dbReference>
<dbReference type="InterPro" id="IPR013815">
    <property type="entry name" value="ATP_grasp_subdomain_1"/>
</dbReference>
<dbReference type="InterPro" id="IPR006284">
    <property type="entry name" value="Glut_synth_pro"/>
</dbReference>
<dbReference type="InterPro" id="IPR004218">
    <property type="entry name" value="GSHS_ATP-bd"/>
</dbReference>
<dbReference type="InterPro" id="IPR004215">
    <property type="entry name" value="GSHS_N"/>
</dbReference>
<dbReference type="InterPro" id="IPR016185">
    <property type="entry name" value="PreATP-grasp_dom_sf"/>
</dbReference>
<dbReference type="NCBIfam" id="TIGR01380">
    <property type="entry name" value="glut_syn"/>
    <property type="match status" value="1"/>
</dbReference>
<dbReference type="NCBIfam" id="NF003573">
    <property type="entry name" value="PRK05246.1"/>
    <property type="match status" value="1"/>
</dbReference>
<dbReference type="PANTHER" id="PTHR21621:SF4">
    <property type="entry name" value="GLUTATHIONE SYNTHETASE"/>
    <property type="match status" value="1"/>
</dbReference>
<dbReference type="PANTHER" id="PTHR21621">
    <property type="entry name" value="RIBOSOMAL PROTEIN S6 MODIFICATION PROTEIN"/>
    <property type="match status" value="1"/>
</dbReference>
<dbReference type="Pfam" id="PF02955">
    <property type="entry name" value="GSH-S_ATP"/>
    <property type="match status" value="1"/>
</dbReference>
<dbReference type="Pfam" id="PF02951">
    <property type="entry name" value="GSH-S_N"/>
    <property type="match status" value="1"/>
</dbReference>
<dbReference type="SUPFAM" id="SSF56059">
    <property type="entry name" value="Glutathione synthetase ATP-binding domain-like"/>
    <property type="match status" value="1"/>
</dbReference>
<dbReference type="SUPFAM" id="SSF52440">
    <property type="entry name" value="PreATP-grasp domain"/>
    <property type="match status" value="1"/>
</dbReference>
<dbReference type="PROSITE" id="PS50975">
    <property type="entry name" value="ATP_GRASP"/>
    <property type="match status" value="1"/>
</dbReference>
<accession>Q9JTJ6</accession>
<accession>A1ISW3</accession>
<protein>
    <recommendedName>
        <fullName evidence="2">Glutathione synthetase</fullName>
        <ecNumber evidence="2">6.3.2.3</ecNumber>
    </recommendedName>
    <alternativeName>
        <fullName evidence="2">GSH synthetase</fullName>
        <shortName evidence="2">GSH-S</shortName>
        <shortName evidence="2">GSHase</shortName>
    </alternativeName>
    <alternativeName>
        <fullName evidence="2">Glutathione synthase</fullName>
    </alternativeName>
</protein>
<comment type="catalytic activity">
    <reaction evidence="2">
        <text>gamma-L-glutamyl-L-cysteine + glycine + ATP = glutathione + ADP + phosphate + H(+)</text>
        <dbReference type="Rhea" id="RHEA:13557"/>
        <dbReference type="ChEBI" id="CHEBI:15378"/>
        <dbReference type="ChEBI" id="CHEBI:30616"/>
        <dbReference type="ChEBI" id="CHEBI:43474"/>
        <dbReference type="ChEBI" id="CHEBI:57305"/>
        <dbReference type="ChEBI" id="CHEBI:57925"/>
        <dbReference type="ChEBI" id="CHEBI:58173"/>
        <dbReference type="ChEBI" id="CHEBI:456216"/>
        <dbReference type="EC" id="6.3.2.3"/>
    </reaction>
</comment>
<comment type="cofactor">
    <cofactor evidence="1">
        <name>Mg(2+)</name>
        <dbReference type="ChEBI" id="CHEBI:18420"/>
    </cofactor>
    <cofactor evidence="1">
        <name>Mn(2+)</name>
        <dbReference type="ChEBI" id="CHEBI:29035"/>
    </cofactor>
    <text evidence="1">Binds 1 Mg(2+) or Mn(2+) ion per subunit.</text>
</comment>
<comment type="pathway">
    <text evidence="2">Sulfur metabolism; glutathione biosynthesis; glutathione from L-cysteine and L-glutamate: step 2/2.</text>
</comment>
<comment type="similarity">
    <text evidence="2">Belongs to the prokaryotic GSH synthase family.</text>
</comment>
<keyword id="KW-0067">ATP-binding</keyword>
<keyword id="KW-0317">Glutathione biosynthesis</keyword>
<keyword id="KW-0436">Ligase</keyword>
<keyword id="KW-0460">Magnesium</keyword>
<keyword id="KW-0464">Manganese</keyword>
<keyword id="KW-0479">Metal-binding</keyword>
<keyword id="KW-0547">Nucleotide-binding</keyword>
<reference key="1">
    <citation type="journal article" date="2000" name="Nature">
        <title>Complete DNA sequence of a serogroup A strain of Neisseria meningitidis Z2491.</title>
        <authorList>
            <person name="Parkhill J."/>
            <person name="Achtman M."/>
            <person name="James K.D."/>
            <person name="Bentley S.D."/>
            <person name="Churcher C.M."/>
            <person name="Klee S.R."/>
            <person name="Morelli G."/>
            <person name="Basham D."/>
            <person name="Brown D."/>
            <person name="Chillingworth T."/>
            <person name="Davies R.M."/>
            <person name="Davis P."/>
            <person name="Devlin K."/>
            <person name="Feltwell T."/>
            <person name="Hamlin N."/>
            <person name="Holroyd S."/>
            <person name="Jagels K."/>
            <person name="Leather S."/>
            <person name="Moule S."/>
            <person name="Mungall K.L."/>
            <person name="Quail M.A."/>
            <person name="Rajandream M.A."/>
            <person name="Rutherford K.M."/>
            <person name="Simmonds M."/>
            <person name="Skelton J."/>
            <person name="Whitehead S."/>
            <person name="Spratt B.G."/>
            <person name="Barrell B.G."/>
        </authorList>
    </citation>
    <scope>NUCLEOTIDE SEQUENCE [LARGE SCALE GENOMIC DNA]</scope>
    <source>
        <strain>DSM 15465 / Z2491</strain>
    </source>
</reference>
<proteinExistence type="inferred from homology"/>
<organism>
    <name type="scientific">Neisseria meningitidis serogroup A / serotype 4A (strain DSM 15465 / Z2491)</name>
    <dbReference type="NCBI Taxonomy" id="122587"/>
    <lineage>
        <taxon>Bacteria</taxon>
        <taxon>Pseudomonadati</taxon>
        <taxon>Pseudomonadota</taxon>
        <taxon>Betaproteobacteria</taxon>
        <taxon>Neisseriales</taxon>
        <taxon>Neisseriaceae</taxon>
        <taxon>Neisseria</taxon>
    </lineage>
</organism>
<sequence>MKVLFIADPMASFKTYKDTTYAMMREMAKRGWRLFHTLSGELSVKNGLVVADASAFEFLGAQDDHDKNWFAAADKVQTALKAFDAVIMRTDPPFDMQYLYATQLLTLAEQQGAKVFNSGQAMRDFNEKLAILNFSRFTAPTLVTTRSADVRAFLKEHGDIIIKPLDGMGGMGIFRLTEKDPNIGSILETLMQLDSRTIMAQRYIPEIVHGDKRILIIGGEVVPYALARIPQNGETRGNLAAGGRGVAQELSERDREIAETLAPELKRRGILLAGLDVIGSNLTEVNVTSPTGFQEIMKQKGFDVAAMFADAVAEWSVR</sequence>
<gene>
    <name evidence="2" type="primary">gshB</name>
    <name type="ordered locus">NMA1747</name>
</gene>
<evidence type="ECO:0000250" key="1"/>
<evidence type="ECO:0000255" key="2">
    <source>
        <dbReference type="HAMAP-Rule" id="MF_00162"/>
    </source>
</evidence>